<proteinExistence type="inferred from homology"/>
<comment type="function">
    <text evidence="1">Catalyzes the removal of a penultimate prolyl residue from the N-termini of peptides.</text>
</comment>
<comment type="catalytic activity">
    <reaction>
        <text>Release of any N-terminal amino acid, including proline, that is linked to proline, even from a dipeptide or tripeptide.</text>
        <dbReference type="EC" id="3.4.11.9"/>
    </reaction>
</comment>
<comment type="cofactor">
    <cofactor evidence="1">
        <name>Mn(2+)</name>
        <dbReference type="ChEBI" id="CHEBI:29035"/>
    </cofactor>
    <text evidence="1">Binds 2 manganese ions per subunit.</text>
</comment>
<comment type="similarity">
    <text evidence="2">Belongs to the peptidase M24B family.</text>
</comment>
<name>AMPP2_ASPOR</name>
<protein>
    <recommendedName>
        <fullName>Probable Xaa-Pro aminopeptidase AO090005001240</fullName>
        <ecNumber>3.4.11.9</ecNumber>
    </recommendedName>
    <alternativeName>
        <fullName>Aminoacylproline aminopeptidase</fullName>
    </alternativeName>
    <alternativeName>
        <fullName>Prolidase</fullName>
    </alternativeName>
</protein>
<gene>
    <name type="ORF">AO090005001240</name>
</gene>
<reference key="1">
    <citation type="journal article" date="2005" name="Nature">
        <title>Genome sequencing and analysis of Aspergillus oryzae.</title>
        <authorList>
            <person name="Machida M."/>
            <person name="Asai K."/>
            <person name="Sano M."/>
            <person name="Tanaka T."/>
            <person name="Kumagai T."/>
            <person name="Terai G."/>
            <person name="Kusumoto K."/>
            <person name="Arima T."/>
            <person name="Akita O."/>
            <person name="Kashiwagi Y."/>
            <person name="Abe K."/>
            <person name="Gomi K."/>
            <person name="Horiuchi H."/>
            <person name="Kitamoto K."/>
            <person name="Kobayashi T."/>
            <person name="Takeuchi M."/>
            <person name="Denning D.W."/>
            <person name="Galagan J.E."/>
            <person name="Nierman W.C."/>
            <person name="Yu J."/>
            <person name="Archer D.B."/>
            <person name="Bennett J.W."/>
            <person name="Bhatnagar D."/>
            <person name="Cleveland T.E."/>
            <person name="Fedorova N.D."/>
            <person name="Gotoh O."/>
            <person name="Horikawa H."/>
            <person name="Hosoyama A."/>
            <person name="Ichinomiya M."/>
            <person name="Igarashi R."/>
            <person name="Iwashita K."/>
            <person name="Juvvadi P.R."/>
            <person name="Kato M."/>
            <person name="Kato Y."/>
            <person name="Kin T."/>
            <person name="Kokubun A."/>
            <person name="Maeda H."/>
            <person name="Maeyama N."/>
            <person name="Maruyama J."/>
            <person name="Nagasaki H."/>
            <person name="Nakajima T."/>
            <person name="Oda K."/>
            <person name="Okada K."/>
            <person name="Paulsen I."/>
            <person name="Sakamoto K."/>
            <person name="Sawano T."/>
            <person name="Takahashi M."/>
            <person name="Takase K."/>
            <person name="Terabayashi Y."/>
            <person name="Wortman J.R."/>
            <person name="Yamada O."/>
            <person name="Yamagata Y."/>
            <person name="Anazawa H."/>
            <person name="Hata Y."/>
            <person name="Koide Y."/>
            <person name="Komori T."/>
            <person name="Koyama Y."/>
            <person name="Minetoki T."/>
            <person name="Suharnan S."/>
            <person name="Tanaka A."/>
            <person name="Isono K."/>
            <person name="Kuhara S."/>
            <person name="Ogasawara N."/>
            <person name="Kikuchi H."/>
        </authorList>
    </citation>
    <scope>NUCLEOTIDE SEQUENCE [LARGE SCALE GENOMIC DNA]</scope>
    <source>
        <strain>ATCC 42149 / RIB 40</strain>
    </source>
</reference>
<feature type="chain" id="PRO_0000411828" description="Probable Xaa-Pro aminopeptidase AO090005001240">
    <location>
        <begin position="1"/>
        <end position="492"/>
    </location>
</feature>
<feature type="binding site" evidence="1">
    <location>
        <position position="272"/>
    </location>
    <ligand>
        <name>Mn(2+)</name>
        <dbReference type="ChEBI" id="CHEBI:29035"/>
        <label>2</label>
    </ligand>
</feature>
<feature type="binding site" evidence="1">
    <location>
        <position position="283"/>
    </location>
    <ligand>
        <name>Mn(2+)</name>
        <dbReference type="ChEBI" id="CHEBI:29035"/>
        <label>1</label>
    </ligand>
</feature>
<feature type="binding site" evidence="1">
    <location>
        <position position="283"/>
    </location>
    <ligand>
        <name>Mn(2+)</name>
        <dbReference type="ChEBI" id="CHEBI:29035"/>
        <label>2</label>
    </ligand>
</feature>
<feature type="binding site" evidence="1">
    <location>
        <position position="420"/>
    </location>
    <ligand>
        <name>Mn(2+)</name>
        <dbReference type="ChEBI" id="CHEBI:29035"/>
        <label>1</label>
    </ligand>
</feature>
<feature type="binding site" evidence="1">
    <location>
        <position position="459"/>
    </location>
    <ligand>
        <name>Mn(2+)</name>
        <dbReference type="ChEBI" id="CHEBI:29035"/>
        <label>1</label>
    </ligand>
</feature>
<feature type="binding site" evidence="1">
    <location>
        <position position="459"/>
    </location>
    <ligand>
        <name>Mn(2+)</name>
        <dbReference type="ChEBI" id="CHEBI:29035"/>
        <label>2</label>
    </ligand>
</feature>
<accession>Q2UQH9</accession>
<sequence length="492" mass="55952">MRVSEPSDVVIRSDDTCHIHLTWSGSECDKYPAKQHARKVAMKLGVSSGLIYLVGQPTVNWGDSDQPQPFRQRRYFYYLSGIDEPDCYLTYDIQADLLTLYVPDFDLRRAVWMGPTLTIEEAHKQSDVDRVNFFAALQHDLEWWTTKNKGTRPIYVLHDSQQPLIPSKRLWLDNERLLPAMNAARVIKDEYELRMIRQANYISGLAHRKILEDIHRMSTEAEIESSFLATCVSHGAKNQSYAIIAGSGENAAVLHYVKNNEPLDGRQLVCLDAGAEWRCYASDVTRTIPLWTDWPSERARNIYRVVEEMQEECIRRIRKGVRFRDLQLLAHDIAIKGLQKLDILTNDCTSAIYESGASAVFFPHGLGHHVGLEVHDVSKRPITALDGNQANWGNHNFVPLLTDSSWSVPLLDEGMVVTIEPGIYFNRLALLNAQNQPLAKYINFDEAEKYIPIGGVRIEDDILVTAKGYENLTTAPKGEEMLEIIRRGIDNS</sequence>
<evidence type="ECO:0000250" key="1"/>
<evidence type="ECO:0000305" key="2"/>
<keyword id="KW-0031">Aminopeptidase</keyword>
<keyword id="KW-0378">Hydrolase</keyword>
<keyword id="KW-0464">Manganese</keyword>
<keyword id="KW-0479">Metal-binding</keyword>
<keyword id="KW-0482">Metalloprotease</keyword>
<keyword id="KW-0645">Protease</keyword>
<keyword id="KW-1185">Reference proteome</keyword>
<organism>
    <name type="scientific">Aspergillus oryzae (strain ATCC 42149 / RIB 40)</name>
    <name type="common">Yellow koji mold</name>
    <dbReference type="NCBI Taxonomy" id="510516"/>
    <lineage>
        <taxon>Eukaryota</taxon>
        <taxon>Fungi</taxon>
        <taxon>Dikarya</taxon>
        <taxon>Ascomycota</taxon>
        <taxon>Pezizomycotina</taxon>
        <taxon>Eurotiomycetes</taxon>
        <taxon>Eurotiomycetidae</taxon>
        <taxon>Eurotiales</taxon>
        <taxon>Aspergillaceae</taxon>
        <taxon>Aspergillus</taxon>
        <taxon>Aspergillus subgen. Circumdati</taxon>
    </lineage>
</organism>
<dbReference type="EC" id="3.4.11.9"/>
<dbReference type="EMBL" id="BA000049">
    <property type="protein sequence ID" value="BAE56186.1"/>
    <property type="molecule type" value="Genomic_DNA"/>
</dbReference>
<dbReference type="RefSeq" id="XP_001818188.3">
    <property type="nucleotide sequence ID" value="XM_001818136.3"/>
</dbReference>
<dbReference type="SMR" id="Q2UQH9"/>
<dbReference type="STRING" id="510516.Q2UQH9"/>
<dbReference type="EnsemblFungi" id="BAE56186">
    <property type="protein sequence ID" value="BAE56186"/>
    <property type="gene ID" value="AO090005001240"/>
</dbReference>
<dbReference type="GeneID" id="5990133"/>
<dbReference type="HOGENOM" id="CLU_017266_1_2_1"/>
<dbReference type="Proteomes" id="UP000006564">
    <property type="component" value="Chromosome 1"/>
</dbReference>
<dbReference type="GO" id="GO:0030145">
    <property type="term" value="F:manganese ion binding"/>
    <property type="evidence" value="ECO:0007669"/>
    <property type="project" value="InterPro"/>
</dbReference>
<dbReference type="GO" id="GO:0070006">
    <property type="term" value="F:metalloaminopeptidase activity"/>
    <property type="evidence" value="ECO:0007669"/>
    <property type="project" value="InterPro"/>
</dbReference>
<dbReference type="GO" id="GO:0006508">
    <property type="term" value="P:proteolysis"/>
    <property type="evidence" value="ECO:0007669"/>
    <property type="project" value="UniProtKB-KW"/>
</dbReference>
<dbReference type="CDD" id="cd01087">
    <property type="entry name" value="Prolidase"/>
    <property type="match status" value="1"/>
</dbReference>
<dbReference type="Gene3D" id="3.90.230.10">
    <property type="entry name" value="Creatinase/methionine aminopeptidase superfamily"/>
    <property type="match status" value="1"/>
</dbReference>
<dbReference type="Gene3D" id="3.40.350.10">
    <property type="entry name" value="Creatinase/prolidase N-terminal domain"/>
    <property type="match status" value="1"/>
</dbReference>
<dbReference type="InterPro" id="IPR007865">
    <property type="entry name" value="Aminopep_P_N"/>
</dbReference>
<dbReference type="InterPro" id="IPR029149">
    <property type="entry name" value="Creatin/AminoP/Spt16_N"/>
</dbReference>
<dbReference type="InterPro" id="IPR036005">
    <property type="entry name" value="Creatinase/aminopeptidase-like"/>
</dbReference>
<dbReference type="InterPro" id="IPR000994">
    <property type="entry name" value="Pept_M24"/>
</dbReference>
<dbReference type="InterPro" id="IPR001131">
    <property type="entry name" value="Peptidase_M24B_aminopep-P_CS"/>
</dbReference>
<dbReference type="InterPro" id="IPR052433">
    <property type="entry name" value="X-Pro_dipept-like"/>
</dbReference>
<dbReference type="PANTHER" id="PTHR43226">
    <property type="entry name" value="XAA-PRO AMINOPEPTIDASE 3"/>
    <property type="match status" value="1"/>
</dbReference>
<dbReference type="PANTHER" id="PTHR43226:SF3">
    <property type="entry name" value="XAA-PRO AMINOPEPTIDASE AN0832-RELATED"/>
    <property type="match status" value="1"/>
</dbReference>
<dbReference type="Pfam" id="PF05195">
    <property type="entry name" value="AMP_N"/>
    <property type="match status" value="1"/>
</dbReference>
<dbReference type="Pfam" id="PF00557">
    <property type="entry name" value="Peptidase_M24"/>
    <property type="match status" value="1"/>
</dbReference>
<dbReference type="SMART" id="SM01011">
    <property type="entry name" value="AMP_N"/>
    <property type="match status" value="1"/>
</dbReference>
<dbReference type="SUPFAM" id="SSF55920">
    <property type="entry name" value="Creatinase/aminopeptidase"/>
    <property type="match status" value="1"/>
</dbReference>
<dbReference type="SUPFAM" id="SSF53092">
    <property type="entry name" value="Creatinase/prolidase N-terminal domain"/>
    <property type="match status" value="1"/>
</dbReference>
<dbReference type="PROSITE" id="PS00491">
    <property type="entry name" value="PROLINE_PEPTIDASE"/>
    <property type="match status" value="1"/>
</dbReference>